<proteinExistence type="evidence at transcript level"/>
<reference key="1">
    <citation type="journal article" date="2003" name="Dev. Genes Evol.">
        <title>Developmental expression of the Xenopus laevis Tbx20 orthologue.</title>
        <authorList>
            <person name="Brown D.D.W."/>
            <person name="Binder O."/>
            <person name="Pagratis M."/>
            <person name="Parr B.A."/>
            <person name="Conlon F.L."/>
        </authorList>
    </citation>
    <scope>NUCLEOTIDE SEQUENCE [MRNA]</scope>
    <scope>TISSUE SPECIFICITY</scope>
    <scope>DEVELOPMENTAL STAGE</scope>
</reference>
<dbReference type="EMBL" id="AY154394">
    <property type="protein sequence ID" value="AAN39113.1"/>
    <property type="molecule type" value="mRNA"/>
</dbReference>
<dbReference type="RefSeq" id="NP_001079332.1">
    <property type="nucleotide sequence ID" value="NM_001085863.1"/>
</dbReference>
<dbReference type="SMR" id="Q8AXW8"/>
<dbReference type="GeneID" id="378656"/>
<dbReference type="KEGG" id="xla:378656"/>
<dbReference type="AGR" id="Xenbase:XB-GENE-865696"/>
<dbReference type="CTD" id="378656"/>
<dbReference type="Xenbase" id="XB-GENE-865696">
    <property type="gene designation" value="tbx20.L"/>
</dbReference>
<dbReference type="OMA" id="IDPEWRY"/>
<dbReference type="OrthoDB" id="7442607at2759"/>
<dbReference type="Proteomes" id="UP000186698">
    <property type="component" value="Chromosome 6L"/>
</dbReference>
<dbReference type="Bgee" id="378656">
    <property type="expression patterns" value="Expressed in heart and 2 other cell types or tissues"/>
</dbReference>
<dbReference type="GO" id="GO:0000785">
    <property type="term" value="C:chromatin"/>
    <property type="evidence" value="ECO:0000318"/>
    <property type="project" value="GO_Central"/>
</dbReference>
<dbReference type="GO" id="GO:0005634">
    <property type="term" value="C:nucleus"/>
    <property type="evidence" value="ECO:0000318"/>
    <property type="project" value="GO_Central"/>
</dbReference>
<dbReference type="GO" id="GO:0000981">
    <property type="term" value="F:DNA-binding transcription factor activity, RNA polymerase II-specific"/>
    <property type="evidence" value="ECO:0000318"/>
    <property type="project" value="GO_Central"/>
</dbReference>
<dbReference type="GO" id="GO:0000978">
    <property type="term" value="F:RNA polymerase II cis-regulatory region sequence-specific DNA binding"/>
    <property type="evidence" value="ECO:0000318"/>
    <property type="project" value="GO_Central"/>
</dbReference>
<dbReference type="GO" id="GO:0001708">
    <property type="term" value="P:cell fate specification"/>
    <property type="evidence" value="ECO:0000318"/>
    <property type="project" value="GO_Central"/>
</dbReference>
<dbReference type="GO" id="GO:0000578">
    <property type="term" value="P:embryonic axis specification"/>
    <property type="evidence" value="ECO:0000315"/>
    <property type="project" value="BHF-UCL"/>
</dbReference>
<dbReference type="GO" id="GO:0001706">
    <property type="term" value="P:endoderm formation"/>
    <property type="evidence" value="ECO:0000315"/>
    <property type="project" value="BHF-UCL"/>
</dbReference>
<dbReference type="GO" id="GO:0007507">
    <property type="term" value="P:heart development"/>
    <property type="evidence" value="ECO:0000315"/>
    <property type="project" value="CACAO"/>
</dbReference>
<dbReference type="GO" id="GO:0048370">
    <property type="term" value="P:lateral mesoderm formation"/>
    <property type="evidence" value="ECO:0000315"/>
    <property type="project" value="BHF-UCL"/>
</dbReference>
<dbReference type="GO" id="GO:0045893">
    <property type="term" value="P:positive regulation of DNA-templated transcription"/>
    <property type="evidence" value="ECO:0007669"/>
    <property type="project" value="InterPro"/>
</dbReference>
<dbReference type="GO" id="GO:0006357">
    <property type="term" value="P:regulation of transcription by RNA polymerase II"/>
    <property type="evidence" value="ECO:0000318"/>
    <property type="project" value="GO_Central"/>
</dbReference>
<dbReference type="CDD" id="cd20193">
    <property type="entry name" value="T-box_TBX20-like"/>
    <property type="match status" value="1"/>
</dbReference>
<dbReference type="FunFam" id="2.60.40.820:FF:000008">
    <property type="entry name" value="T-box transcription factor TBX20"/>
    <property type="match status" value="1"/>
</dbReference>
<dbReference type="Gene3D" id="2.60.40.820">
    <property type="entry name" value="Transcription factor, T-box"/>
    <property type="match status" value="1"/>
</dbReference>
<dbReference type="InterPro" id="IPR008967">
    <property type="entry name" value="p53-like_TF_DNA-bd_sf"/>
</dbReference>
<dbReference type="InterPro" id="IPR046360">
    <property type="entry name" value="T-box_DNA-bd"/>
</dbReference>
<dbReference type="InterPro" id="IPR036960">
    <property type="entry name" value="T-box_sf"/>
</dbReference>
<dbReference type="InterPro" id="IPR001699">
    <property type="entry name" value="TF_T-box"/>
</dbReference>
<dbReference type="InterPro" id="IPR018186">
    <property type="entry name" value="TF_T-box_CS"/>
</dbReference>
<dbReference type="PANTHER" id="PTHR11267">
    <property type="entry name" value="T-BOX PROTEIN-RELATED"/>
    <property type="match status" value="1"/>
</dbReference>
<dbReference type="PANTHER" id="PTHR11267:SF190">
    <property type="entry name" value="T-BOX TRANSCRIPTION FACTOR TBX20"/>
    <property type="match status" value="1"/>
</dbReference>
<dbReference type="Pfam" id="PF00907">
    <property type="entry name" value="T-box"/>
    <property type="match status" value="1"/>
</dbReference>
<dbReference type="PRINTS" id="PR00937">
    <property type="entry name" value="TBOX"/>
</dbReference>
<dbReference type="SMART" id="SM00425">
    <property type="entry name" value="TBOX"/>
    <property type="match status" value="1"/>
</dbReference>
<dbReference type="SUPFAM" id="SSF49417">
    <property type="entry name" value="p53-like transcription factors"/>
    <property type="match status" value="1"/>
</dbReference>
<dbReference type="PROSITE" id="PS01283">
    <property type="entry name" value="TBOX_1"/>
    <property type="match status" value="1"/>
</dbReference>
<dbReference type="PROSITE" id="PS01264">
    <property type="entry name" value="TBOX_2"/>
    <property type="match status" value="1"/>
</dbReference>
<dbReference type="PROSITE" id="PS50252">
    <property type="entry name" value="TBOX_3"/>
    <property type="match status" value="1"/>
</dbReference>
<evidence type="ECO:0000250" key="1"/>
<evidence type="ECO:0000255" key="2">
    <source>
        <dbReference type="PROSITE-ProRule" id="PRU00201"/>
    </source>
</evidence>
<evidence type="ECO:0000269" key="3">
    <source>
    </source>
</evidence>
<comment type="function">
    <text evidence="1">Transcriptional regulator that may be involved in heart developmental processes.</text>
</comment>
<comment type="subcellular location">
    <subcellularLocation>
        <location evidence="2">Nucleus</location>
    </subcellularLocation>
</comment>
<comment type="tissue specificity">
    <text evidence="3">Expressed throughout all cardiac tissue during later stages of development. Also expressed in the cement gland, jugular vein, lung bud, cloacal aperture, rhombomeres 2, 4, 6 and 8 and in a subset of motor neurons.</text>
</comment>
<comment type="developmental stage">
    <text evidence="3">First detected at low but consistent levels by early neural stage (stage 16) with expression then increasing by stage 19 and remaining relatively constant until a sharp drop off at later neurula stages (stages 23-28). However, there is a sharp increase in expression between early (stage 30) and mid-tadpole stages.</text>
</comment>
<accession>Q8AXW8</accession>
<organism>
    <name type="scientific">Xenopus laevis</name>
    <name type="common">African clawed frog</name>
    <dbReference type="NCBI Taxonomy" id="8355"/>
    <lineage>
        <taxon>Eukaryota</taxon>
        <taxon>Metazoa</taxon>
        <taxon>Chordata</taxon>
        <taxon>Craniata</taxon>
        <taxon>Vertebrata</taxon>
        <taxon>Euteleostomi</taxon>
        <taxon>Amphibia</taxon>
        <taxon>Batrachia</taxon>
        <taxon>Anura</taxon>
        <taxon>Pipoidea</taxon>
        <taxon>Pipidae</taxon>
        <taxon>Xenopodinae</taxon>
        <taxon>Xenopus</taxon>
        <taxon>Xenopus</taxon>
    </lineage>
</organism>
<sequence>MEYTPSPKPQLSSRANAFSIAALMSSGTPKDKEAQESTIKPLEQFVEKSSCSQPIGDISIVDSHGEFTNSPSSLCTEPLIPTTPIIPSEEMAKISCSLETKELWDKFHDLGTEMIITKSGRRMFPTIRVSFSGVDADAKYIVLMDIVPVDNKRYRYAYHRSAWLVAGKADPPLPARLYVHPDSPFTGEQLLKQMVSFEKVKLTNNELDQHGHIILNSMHKYQPRVHIIKKKDHTASLLNLKSEEFRTFIFQETVFTAVTAYQNQLITKLKIDSNPFAKGFRDSSRLTDIERESVESLIQKHSYARSPIRTYGGDEDVLSEDGQVVQCRGSAFTTSDNLSLSSWVSSTSGFSGFQHPQSLTALGTSTASLATPIPHPIQGSLPPYSRLGMPLTPSALASSMQGSGPTFPSFHMPRYHHYFQQGPYAAIQGLRHSSTVMTPFV</sequence>
<protein>
    <recommendedName>
        <fullName>T-box transcription factor TBX20</fullName>
        <shortName>T-box protein 20</shortName>
    </recommendedName>
</protein>
<gene>
    <name type="primary">tbx20</name>
</gene>
<name>TBX20_XENLA</name>
<feature type="chain" id="PRO_0000262694" description="T-box transcription factor TBX20">
    <location>
        <begin position="1"/>
        <end position="441"/>
    </location>
</feature>
<feature type="DNA-binding region" description="T-box" evidence="2">
    <location>
        <begin position="103"/>
        <end position="282"/>
    </location>
</feature>
<keyword id="KW-0217">Developmental protein</keyword>
<keyword id="KW-0238">DNA-binding</keyword>
<keyword id="KW-0539">Nucleus</keyword>
<keyword id="KW-1185">Reference proteome</keyword>
<keyword id="KW-0804">Transcription</keyword>
<keyword id="KW-0805">Transcription regulation</keyword>